<dbReference type="EMBL" id="CP000909">
    <property type="protein sequence ID" value="ABY36245.1"/>
    <property type="molecule type" value="Genomic_DNA"/>
</dbReference>
<dbReference type="RefSeq" id="WP_012258898.1">
    <property type="nucleotide sequence ID" value="NC_010175.1"/>
</dbReference>
<dbReference type="RefSeq" id="YP_001636634.1">
    <property type="nucleotide sequence ID" value="NC_010175.1"/>
</dbReference>
<dbReference type="SMR" id="A9WGS9"/>
<dbReference type="FunCoup" id="A9WGS9">
    <property type="interactions" value="372"/>
</dbReference>
<dbReference type="STRING" id="324602.Caur_3046"/>
<dbReference type="EnsemblBacteria" id="ABY36245">
    <property type="protein sequence ID" value="ABY36245"/>
    <property type="gene ID" value="Caur_3046"/>
</dbReference>
<dbReference type="KEGG" id="cau:Caur_3046"/>
<dbReference type="PATRIC" id="fig|324602.8.peg.3447"/>
<dbReference type="eggNOG" id="COG0636">
    <property type="taxonomic scope" value="Bacteria"/>
</dbReference>
<dbReference type="HOGENOM" id="CLU_148047_5_0_0"/>
<dbReference type="InParanoid" id="A9WGS9"/>
<dbReference type="Proteomes" id="UP000002008">
    <property type="component" value="Chromosome"/>
</dbReference>
<dbReference type="GO" id="GO:0005886">
    <property type="term" value="C:plasma membrane"/>
    <property type="evidence" value="ECO:0007669"/>
    <property type="project" value="UniProtKB-SubCell"/>
</dbReference>
<dbReference type="GO" id="GO:0045259">
    <property type="term" value="C:proton-transporting ATP synthase complex"/>
    <property type="evidence" value="ECO:0007669"/>
    <property type="project" value="UniProtKB-KW"/>
</dbReference>
<dbReference type="GO" id="GO:0033177">
    <property type="term" value="C:proton-transporting two-sector ATPase complex, proton-transporting domain"/>
    <property type="evidence" value="ECO:0007669"/>
    <property type="project" value="InterPro"/>
</dbReference>
<dbReference type="GO" id="GO:0008289">
    <property type="term" value="F:lipid binding"/>
    <property type="evidence" value="ECO:0007669"/>
    <property type="project" value="UniProtKB-KW"/>
</dbReference>
<dbReference type="GO" id="GO:0046933">
    <property type="term" value="F:proton-transporting ATP synthase activity, rotational mechanism"/>
    <property type="evidence" value="ECO:0007669"/>
    <property type="project" value="UniProtKB-UniRule"/>
</dbReference>
<dbReference type="GO" id="GO:0015986">
    <property type="term" value="P:proton motive force-driven ATP synthesis"/>
    <property type="evidence" value="ECO:0000318"/>
    <property type="project" value="GO_Central"/>
</dbReference>
<dbReference type="CDD" id="cd18121">
    <property type="entry name" value="ATP-synt_Fo_c"/>
    <property type="match status" value="1"/>
</dbReference>
<dbReference type="FunFam" id="1.20.20.10:FF:000004">
    <property type="entry name" value="ATP synthase subunit c"/>
    <property type="match status" value="1"/>
</dbReference>
<dbReference type="Gene3D" id="1.20.20.10">
    <property type="entry name" value="F1F0 ATP synthase subunit C"/>
    <property type="match status" value="1"/>
</dbReference>
<dbReference type="HAMAP" id="MF_01396">
    <property type="entry name" value="ATP_synth_c_bact"/>
    <property type="match status" value="1"/>
</dbReference>
<dbReference type="InterPro" id="IPR005953">
    <property type="entry name" value="ATP_synth_csu_bac/chlpt"/>
</dbReference>
<dbReference type="InterPro" id="IPR000454">
    <property type="entry name" value="ATP_synth_F0_csu"/>
</dbReference>
<dbReference type="InterPro" id="IPR020537">
    <property type="entry name" value="ATP_synth_F0_csu_DDCD_BS"/>
</dbReference>
<dbReference type="InterPro" id="IPR038662">
    <property type="entry name" value="ATP_synth_F0_csu_sf"/>
</dbReference>
<dbReference type="InterPro" id="IPR002379">
    <property type="entry name" value="ATPase_proteolipid_c-like_dom"/>
</dbReference>
<dbReference type="InterPro" id="IPR035921">
    <property type="entry name" value="F/V-ATP_Csub_sf"/>
</dbReference>
<dbReference type="NCBIfam" id="TIGR01260">
    <property type="entry name" value="ATP_synt_c"/>
    <property type="match status" value="1"/>
</dbReference>
<dbReference type="PANTHER" id="PTHR10031">
    <property type="entry name" value="ATP SYNTHASE LIPID-BINDING PROTEIN, MITOCHONDRIAL"/>
    <property type="match status" value="1"/>
</dbReference>
<dbReference type="PANTHER" id="PTHR10031:SF0">
    <property type="entry name" value="ATPASE PROTEIN 9"/>
    <property type="match status" value="1"/>
</dbReference>
<dbReference type="Pfam" id="PF00137">
    <property type="entry name" value="ATP-synt_C"/>
    <property type="match status" value="1"/>
</dbReference>
<dbReference type="PRINTS" id="PR00124">
    <property type="entry name" value="ATPASEC"/>
</dbReference>
<dbReference type="SUPFAM" id="SSF81333">
    <property type="entry name" value="F1F0 ATP synthase subunit C"/>
    <property type="match status" value="1"/>
</dbReference>
<dbReference type="PROSITE" id="PS00605">
    <property type="entry name" value="ATPASE_C"/>
    <property type="match status" value="1"/>
</dbReference>
<sequence length="76" mass="7686">MEGLNLVATALAVGLGAIGPGVGIGIIVSGAVQAIGRNPEIENRVVTYMFIGIAFTEALAIFGLVIAFLIGFGVLQ</sequence>
<proteinExistence type="inferred from homology"/>
<feature type="chain" id="PRO_0000365864" description="ATP synthase subunit c">
    <location>
        <begin position="1"/>
        <end position="76"/>
    </location>
</feature>
<feature type="transmembrane region" description="Helical" evidence="1">
    <location>
        <begin position="7"/>
        <end position="27"/>
    </location>
</feature>
<feature type="transmembrane region" description="Helical" evidence="1">
    <location>
        <begin position="50"/>
        <end position="70"/>
    </location>
</feature>
<feature type="site" description="Reversibly protonated during proton transport" evidence="1">
    <location>
        <position position="57"/>
    </location>
</feature>
<accession>A9WGS9</accession>
<keyword id="KW-0066">ATP synthesis</keyword>
<keyword id="KW-1003">Cell membrane</keyword>
<keyword id="KW-0138">CF(0)</keyword>
<keyword id="KW-0375">Hydrogen ion transport</keyword>
<keyword id="KW-0406">Ion transport</keyword>
<keyword id="KW-0446">Lipid-binding</keyword>
<keyword id="KW-0472">Membrane</keyword>
<keyword id="KW-1185">Reference proteome</keyword>
<keyword id="KW-0812">Transmembrane</keyword>
<keyword id="KW-1133">Transmembrane helix</keyword>
<keyword id="KW-0813">Transport</keyword>
<comment type="function">
    <text evidence="1">F(1)F(0) ATP synthase produces ATP from ADP in the presence of a proton or sodium gradient. F-type ATPases consist of two structural domains, F(1) containing the extramembraneous catalytic core and F(0) containing the membrane proton channel, linked together by a central stalk and a peripheral stalk. During catalysis, ATP synthesis in the catalytic domain of F(1) is coupled via a rotary mechanism of the central stalk subunits to proton translocation.</text>
</comment>
<comment type="function">
    <text evidence="1">Key component of the F(0) channel; it plays a direct role in translocation across the membrane. A homomeric c-ring of between 10-14 subunits forms the central stalk rotor element with the F(1) delta and epsilon subunits.</text>
</comment>
<comment type="subunit">
    <text evidence="1">F-type ATPases have 2 components, F(1) - the catalytic core - and F(0) - the membrane proton channel. F(1) has five subunits: alpha(3), beta(3), gamma(1), delta(1), epsilon(1). F(0) has four main subunits: a(1), b(1), b'(1) and c(10-14). The alpha and beta chains form an alternating ring which encloses part of the gamma chain. F(1) is attached to F(0) by a central stalk formed by the gamma and epsilon chains, while a peripheral stalk is formed by the delta, b and b' chains.</text>
</comment>
<comment type="subcellular location">
    <subcellularLocation>
        <location evidence="1">Cell membrane</location>
        <topology evidence="1">Multi-pass membrane protein</topology>
    </subcellularLocation>
</comment>
<comment type="similarity">
    <text evidence="1">Belongs to the ATPase C chain family.</text>
</comment>
<gene>
    <name evidence="1" type="primary">atpE</name>
    <name type="ordered locus">Caur_3046</name>
</gene>
<name>ATPL_CHLAA</name>
<protein>
    <recommendedName>
        <fullName evidence="1">ATP synthase subunit c</fullName>
    </recommendedName>
    <alternativeName>
        <fullName evidence="1">ATP synthase F(0) sector subunit c</fullName>
    </alternativeName>
    <alternativeName>
        <fullName evidence="1">F-type ATPase subunit c</fullName>
        <shortName evidence="1">F-ATPase subunit c</shortName>
    </alternativeName>
    <alternativeName>
        <fullName evidence="1">Lipid-binding protein</fullName>
    </alternativeName>
</protein>
<organism>
    <name type="scientific">Chloroflexus aurantiacus (strain ATCC 29366 / DSM 635 / J-10-fl)</name>
    <dbReference type="NCBI Taxonomy" id="324602"/>
    <lineage>
        <taxon>Bacteria</taxon>
        <taxon>Bacillati</taxon>
        <taxon>Chloroflexota</taxon>
        <taxon>Chloroflexia</taxon>
        <taxon>Chloroflexales</taxon>
        <taxon>Chloroflexineae</taxon>
        <taxon>Chloroflexaceae</taxon>
        <taxon>Chloroflexus</taxon>
    </lineage>
</organism>
<evidence type="ECO:0000255" key="1">
    <source>
        <dbReference type="HAMAP-Rule" id="MF_01396"/>
    </source>
</evidence>
<reference key="1">
    <citation type="journal article" date="2011" name="BMC Genomics">
        <title>Complete genome sequence of the filamentous anoxygenic phototrophic bacterium Chloroflexus aurantiacus.</title>
        <authorList>
            <person name="Tang K.H."/>
            <person name="Barry K."/>
            <person name="Chertkov O."/>
            <person name="Dalin E."/>
            <person name="Han C.S."/>
            <person name="Hauser L.J."/>
            <person name="Honchak B.M."/>
            <person name="Karbach L.E."/>
            <person name="Land M.L."/>
            <person name="Lapidus A."/>
            <person name="Larimer F.W."/>
            <person name="Mikhailova N."/>
            <person name="Pitluck S."/>
            <person name="Pierson B.K."/>
            <person name="Blankenship R.E."/>
        </authorList>
    </citation>
    <scope>NUCLEOTIDE SEQUENCE [LARGE SCALE GENOMIC DNA]</scope>
    <source>
        <strain>ATCC 29366 / DSM 635 / J-10-fl</strain>
    </source>
</reference>